<organism>
    <name type="scientific">Pseudoalteromonas translucida (strain TAC 125)</name>
    <dbReference type="NCBI Taxonomy" id="326442"/>
    <lineage>
        <taxon>Bacteria</taxon>
        <taxon>Pseudomonadati</taxon>
        <taxon>Pseudomonadota</taxon>
        <taxon>Gammaproteobacteria</taxon>
        <taxon>Alteromonadales</taxon>
        <taxon>Pseudoalteromonadaceae</taxon>
        <taxon>Pseudoalteromonas</taxon>
    </lineage>
</organism>
<gene>
    <name evidence="1" type="primary">nadK</name>
    <name type="ordered locus">PSHAa1220</name>
</gene>
<name>NADK_PSET1</name>
<comment type="function">
    <text evidence="1">Involved in the regulation of the intracellular balance of NAD and NADP, and is a key enzyme in the biosynthesis of NADP. Catalyzes specifically the phosphorylation on 2'-hydroxyl of the adenosine moiety of NAD to yield NADP.</text>
</comment>
<comment type="catalytic activity">
    <reaction evidence="1">
        <text>NAD(+) + ATP = ADP + NADP(+) + H(+)</text>
        <dbReference type="Rhea" id="RHEA:18629"/>
        <dbReference type="ChEBI" id="CHEBI:15378"/>
        <dbReference type="ChEBI" id="CHEBI:30616"/>
        <dbReference type="ChEBI" id="CHEBI:57540"/>
        <dbReference type="ChEBI" id="CHEBI:58349"/>
        <dbReference type="ChEBI" id="CHEBI:456216"/>
        <dbReference type="EC" id="2.7.1.23"/>
    </reaction>
</comment>
<comment type="cofactor">
    <cofactor evidence="1">
        <name>a divalent metal cation</name>
        <dbReference type="ChEBI" id="CHEBI:60240"/>
    </cofactor>
</comment>
<comment type="subcellular location">
    <subcellularLocation>
        <location evidence="1">Cytoplasm</location>
    </subcellularLocation>
</comment>
<comment type="similarity">
    <text evidence="1">Belongs to the NAD kinase family.</text>
</comment>
<reference key="1">
    <citation type="journal article" date="2005" name="Genome Res.">
        <title>Coping with cold: the genome of the versatile marine Antarctica bacterium Pseudoalteromonas haloplanktis TAC125.</title>
        <authorList>
            <person name="Medigue C."/>
            <person name="Krin E."/>
            <person name="Pascal G."/>
            <person name="Barbe V."/>
            <person name="Bernsel A."/>
            <person name="Bertin P.N."/>
            <person name="Cheung F."/>
            <person name="Cruveiller S."/>
            <person name="D'Amico S."/>
            <person name="Duilio A."/>
            <person name="Fang G."/>
            <person name="Feller G."/>
            <person name="Ho C."/>
            <person name="Mangenot S."/>
            <person name="Marino G."/>
            <person name="Nilsson J."/>
            <person name="Parrilli E."/>
            <person name="Rocha E.P.C."/>
            <person name="Rouy Z."/>
            <person name="Sekowska A."/>
            <person name="Tutino M.L."/>
            <person name="Vallenet D."/>
            <person name="von Heijne G."/>
            <person name="Danchin A."/>
        </authorList>
    </citation>
    <scope>NUCLEOTIDE SEQUENCE [LARGE SCALE GENOMIC DNA]</scope>
    <source>
        <strain>TAC 125</strain>
    </source>
</reference>
<proteinExistence type="inferred from homology"/>
<accession>Q3IKR4</accession>
<feature type="chain" id="PRO_0000229677" description="NAD kinase">
    <location>
        <begin position="1"/>
        <end position="294"/>
    </location>
</feature>
<feature type="active site" description="Proton acceptor" evidence="1">
    <location>
        <position position="74"/>
    </location>
</feature>
<feature type="binding site" evidence="1">
    <location>
        <begin position="74"/>
        <end position="75"/>
    </location>
    <ligand>
        <name>NAD(+)</name>
        <dbReference type="ChEBI" id="CHEBI:57540"/>
    </ligand>
</feature>
<feature type="binding site" evidence="1">
    <location>
        <begin position="148"/>
        <end position="149"/>
    </location>
    <ligand>
        <name>NAD(+)</name>
        <dbReference type="ChEBI" id="CHEBI:57540"/>
    </ligand>
</feature>
<feature type="binding site" evidence="1">
    <location>
        <position position="159"/>
    </location>
    <ligand>
        <name>NAD(+)</name>
        <dbReference type="ChEBI" id="CHEBI:57540"/>
    </ligand>
</feature>
<feature type="binding site" evidence="1">
    <location>
        <position position="176"/>
    </location>
    <ligand>
        <name>NAD(+)</name>
        <dbReference type="ChEBI" id="CHEBI:57540"/>
    </ligand>
</feature>
<feature type="binding site" evidence="1">
    <location>
        <position position="178"/>
    </location>
    <ligand>
        <name>NAD(+)</name>
        <dbReference type="ChEBI" id="CHEBI:57540"/>
    </ligand>
</feature>
<feature type="binding site" evidence="1">
    <location>
        <begin position="189"/>
        <end position="194"/>
    </location>
    <ligand>
        <name>NAD(+)</name>
        <dbReference type="ChEBI" id="CHEBI:57540"/>
    </ligand>
</feature>
<protein>
    <recommendedName>
        <fullName evidence="1">NAD kinase</fullName>
        <ecNumber evidence="1">2.7.1.23</ecNumber>
    </recommendedName>
    <alternativeName>
        <fullName evidence="1">ATP-dependent NAD kinase</fullName>
    </alternativeName>
</protein>
<dbReference type="EC" id="2.7.1.23" evidence="1"/>
<dbReference type="EMBL" id="CR954246">
    <property type="protein sequence ID" value="CAI86295.1"/>
    <property type="molecule type" value="Genomic_DNA"/>
</dbReference>
<dbReference type="SMR" id="Q3IKR4"/>
<dbReference type="STRING" id="326442.PSHAa1220"/>
<dbReference type="KEGG" id="pha:PSHAa1220"/>
<dbReference type="PATRIC" id="fig|326442.8.peg.1174"/>
<dbReference type="eggNOG" id="COG0061">
    <property type="taxonomic scope" value="Bacteria"/>
</dbReference>
<dbReference type="HOGENOM" id="CLU_008831_0_1_6"/>
<dbReference type="BioCyc" id="PHAL326442:PSHA_RS06020-MONOMER"/>
<dbReference type="Proteomes" id="UP000006843">
    <property type="component" value="Chromosome I"/>
</dbReference>
<dbReference type="GO" id="GO:0005737">
    <property type="term" value="C:cytoplasm"/>
    <property type="evidence" value="ECO:0007669"/>
    <property type="project" value="UniProtKB-SubCell"/>
</dbReference>
<dbReference type="GO" id="GO:0005524">
    <property type="term" value="F:ATP binding"/>
    <property type="evidence" value="ECO:0007669"/>
    <property type="project" value="UniProtKB-KW"/>
</dbReference>
<dbReference type="GO" id="GO:0046872">
    <property type="term" value="F:metal ion binding"/>
    <property type="evidence" value="ECO:0007669"/>
    <property type="project" value="UniProtKB-UniRule"/>
</dbReference>
<dbReference type="GO" id="GO:0051287">
    <property type="term" value="F:NAD binding"/>
    <property type="evidence" value="ECO:0007669"/>
    <property type="project" value="UniProtKB-ARBA"/>
</dbReference>
<dbReference type="GO" id="GO:0003951">
    <property type="term" value="F:NAD+ kinase activity"/>
    <property type="evidence" value="ECO:0007669"/>
    <property type="project" value="UniProtKB-UniRule"/>
</dbReference>
<dbReference type="GO" id="GO:0019674">
    <property type="term" value="P:NAD metabolic process"/>
    <property type="evidence" value="ECO:0007669"/>
    <property type="project" value="InterPro"/>
</dbReference>
<dbReference type="GO" id="GO:0006741">
    <property type="term" value="P:NADP biosynthetic process"/>
    <property type="evidence" value="ECO:0007669"/>
    <property type="project" value="UniProtKB-UniRule"/>
</dbReference>
<dbReference type="FunFam" id="2.60.200.30:FF:000001">
    <property type="entry name" value="NAD kinase"/>
    <property type="match status" value="1"/>
</dbReference>
<dbReference type="Gene3D" id="3.40.50.10330">
    <property type="entry name" value="Probable inorganic polyphosphate/atp-NAD kinase, domain 1"/>
    <property type="match status" value="1"/>
</dbReference>
<dbReference type="Gene3D" id="2.60.200.30">
    <property type="entry name" value="Probable inorganic polyphosphate/atp-NAD kinase, domain 2"/>
    <property type="match status" value="1"/>
</dbReference>
<dbReference type="HAMAP" id="MF_00361">
    <property type="entry name" value="NAD_kinase"/>
    <property type="match status" value="1"/>
</dbReference>
<dbReference type="InterPro" id="IPR017438">
    <property type="entry name" value="ATP-NAD_kinase_N"/>
</dbReference>
<dbReference type="InterPro" id="IPR017437">
    <property type="entry name" value="ATP-NAD_kinase_PpnK-typ_C"/>
</dbReference>
<dbReference type="InterPro" id="IPR016064">
    <property type="entry name" value="NAD/diacylglycerol_kinase_sf"/>
</dbReference>
<dbReference type="InterPro" id="IPR002504">
    <property type="entry name" value="NADK"/>
</dbReference>
<dbReference type="NCBIfam" id="NF002306">
    <property type="entry name" value="PRK01231.1"/>
    <property type="match status" value="1"/>
</dbReference>
<dbReference type="NCBIfam" id="NF002893">
    <property type="entry name" value="PRK03378.1"/>
    <property type="match status" value="1"/>
</dbReference>
<dbReference type="PANTHER" id="PTHR20275">
    <property type="entry name" value="NAD KINASE"/>
    <property type="match status" value="1"/>
</dbReference>
<dbReference type="PANTHER" id="PTHR20275:SF0">
    <property type="entry name" value="NAD KINASE"/>
    <property type="match status" value="1"/>
</dbReference>
<dbReference type="Pfam" id="PF01513">
    <property type="entry name" value="NAD_kinase"/>
    <property type="match status" value="1"/>
</dbReference>
<dbReference type="Pfam" id="PF20143">
    <property type="entry name" value="NAD_kinase_C"/>
    <property type="match status" value="1"/>
</dbReference>
<dbReference type="SUPFAM" id="SSF111331">
    <property type="entry name" value="NAD kinase/diacylglycerol kinase-like"/>
    <property type="match status" value="1"/>
</dbReference>
<keyword id="KW-0067">ATP-binding</keyword>
<keyword id="KW-0963">Cytoplasm</keyword>
<keyword id="KW-0418">Kinase</keyword>
<keyword id="KW-0520">NAD</keyword>
<keyword id="KW-0521">NADP</keyword>
<keyword id="KW-0547">Nucleotide-binding</keyword>
<keyword id="KW-1185">Reference proteome</keyword>
<keyword id="KW-0808">Transferase</keyword>
<evidence type="ECO:0000255" key="1">
    <source>
        <dbReference type="HAMAP-Rule" id="MF_00361"/>
    </source>
</evidence>
<sequence>MDSPFRTIGLIGKPNHPDAAATLQRLHTFLLALGFTVIVEKRTGSQLIDIPKNKLVKLVDLGEQADLAIVVGGDGNMLGAARVLARFDIAVIGVNRGNLGFLTDLNPEGFEASLEQVLSGEYVEEKRFLLEVEVYRHNELKSANSAVNEAVLHADKVAHMIEFEAFINNDFVFSQRSDGLIVSTPTGSTAYSLSGGGPILTPELNAIALVPMFPHTLSSRPLVVDADNEVRLKLSLENTDSLQVSCDSHVVLAVLPGDEVVIKKADKKLRLIHPKNYSYYNVLRQKLNWGSRLY</sequence>